<feature type="chain" id="PRO_0000244887" description="NADH-quinone oxidoreductase subunit H">
    <location>
        <begin position="1"/>
        <end position="352"/>
    </location>
</feature>
<feature type="transmembrane region" description="Helical" evidence="1">
    <location>
        <begin position="18"/>
        <end position="38"/>
    </location>
</feature>
<feature type="transmembrane region" description="Helical" evidence="1">
    <location>
        <begin position="84"/>
        <end position="104"/>
    </location>
</feature>
<feature type="transmembrane region" description="Helical" evidence="1">
    <location>
        <begin position="129"/>
        <end position="149"/>
    </location>
</feature>
<feature type="transmembrane region" description="Helical" evidence="1">
    <location>
        <begin position="177"/>
        <end position="197"/>
    </location>
</feature>
<feature type="transmembrane region" description="Helical" evidence="1">
    <location>
        <begin position="201"/>
        <end position="221"/>
    </location>
</feature>
<feature type="transmembrane region" description="Helical" evidence="1">
    <location>
        <begin position="254"/>
        <end position="274"/>
    </location>
</feature>
<feature type="transmembrane region" description="Helical" evidence="1">
    <location>
        <begin position="289"/>
        <end position="309"/>
    </location>
</feature>
<feature type="transmembrane region" description="Helical" evidence="1">
    <location>
        <begin position="328"/>
        <end position="348"/>
    </location>
</feature>
<gene>
    <name evidence="1" type="primary">nuoH</name>
    <name type="ordered locus">AM640</name>
</gene>
<keyword id="KW-0997">Cell inner membrane</keyword>
<keyword id="KW-1003">Cell membrane</keyword>
<keyword id="KW-0472">Membrane</keyword>
<keyword id="KW-0520">NAD</keyword>
<keyword id="KW-0874">Quinone</keyword>
<keyword id="KW-1278">Translocase</keyword>
<keyword id="KW-0812">Transmembrane</keyword>
<keyword id="KW-1133">Transmembrane helix</keyword>
<keyword id="KW-0830">Ubiquinone</keyword>
<name>NUOH_ANAMM</name>
<dbReference type="EC" id="7.1.1.-" evidence="1"/>
<dbReference type="EMBL" id="CP000030">
    <property type="protein sequence ID" value="AAV86628.1"/>
    <property type="molecule type" value="Genomic_DNA"/>
</dbReference>
<dbReference type="RefSeq" id="WP_011114371.1">
    <property type="nucleotide sequence ID" value="NC_004842.2"/>
</dbReference>
<dbReference type="SMR" id="Q5PAQ2"/>
<dbReference type="KEGG" id="ama:AM640"/>
<dbReference type="HOGENOM" id="CLU_015134_0_1_5"/>
<dbReference type="GO" id="GO:0005886">
    <property type="term" value="C:plasma membrane"/>
    <property type="evidence" value="ECO:0007669"/>
    <property type="project" value="UniProtKB-SubCell"/>
</dbReference>
<dbReference type="GO" id="GO:0003954">
    <property type="term" value="F:NADH dehydrogenase activity"/>
    <property type="evidence" value="ECO:0007669"/>
    <property type="project" value="TreeGrafter"/>
</dbReference>
<dbReference type="GO" id="GO:0016655">
    <property type="term" value="F:oxidoreductase activity, acting on NAD(P)H, quinone or similar compound as acceptor"/>
    <property type="evidence" value="ECO:0007669"/>
    <property type="project" value="UniProtKB-UniRule"/>
</dbReference>
<dbReference type="GO" id="GO:0048038">
    <property type="term" value="F:quinone binding"/>
    <property type="evidence" value="ECO:0007669"/>
    <property type="project" value="UniProtKB-KW"/>
</dbReference>
<dbReference type="GO" id="GO:0009060">
    <property type="term" value="P:aerobic respiration"/>
    <property type="evidence" value="ECO:0007669"/>
    <property type="project" value="TreeGrafter"/>
</dbReference>
<dbReference type="HAMAP" id="MF_01350">
    <property type="entry name" value="NDH1_NuoH"/>
    <property type="match status" value="1"/>
</dbReference>
<dbReference type="InterPro" id="IPR001694">
    <property type="entry name" value="NADH_UbQ_OxRdtase_su1/FPO"/>
</dbReference>
<dbReference type="InterPro" id="IPR018086">
    <property type="entry name" value="NADH_UbQ_OxRdtase_su1_CS"/>
</dbReference>
<dbReference type="NCBIfam" id="NF004741">
    <property type="entry name" value="PRK06076.1-2"/>
    <property type="match status" value="1"/>
</dbReference>
<dbReference type="NCBIfam" id="NF004745">
    <property type="entry name" value="PRK06076.1-6"/>
    <property type="match status" value="1"/>
</dbReference>
<dbReference type="PANTHER" id="PTHR11432">
    <property type="entry name" value="NADH DEHYDROGENASE SUBUNIT 1"/>
    <property type="match status" value="1"/>
</dbReference>
<dbReference type="PANTHER" id="PTHR11432:SF3">
    <property type="entry name" value="NADH-UBIQUINONE OXIDOREDUCTASE CHAIN 1"/>
    <property type="match status" value="1"/>
</dbReference>
<dbReference type="Pfam" id="PF00146">
    <property type="entry name" value="NADHdh"/>
    <property type="match status" value="1"/>
</dbReference>
<dbReference type="PROSITE" id="PS00667">
    <property type="entry name" value="COMPLEX1_ND1_1"/>
    <property type="match status" value="1"/>
</dbReference>
<dbReference type="PROSITE" id="PS00668">
    <property type="entry name" value="COMPLEX1_ND1_2"/>
    <property type="match status" value="1"/>
</dbReference>
<evidence type="ECO:0000255" key="1">
    <source>
        <dbReference type="HAMAP-Rule" id="MF_01350"/>
    </source>
</evidence>
<reference key="1">
    <citation type="journal article" date="2005" name="Proc. Natl. Acad. Sci. U.S.A.">
        <title>Complete genome sequencing of Anaplasma marginale reveals that the surface is skewed to two superfamilies of outer membrane proteins.</title>
        <authorList>
            <person name="Brayton K.A."/>
            <person name="Kappmeyer L.S."/>
            <person name="Herndon D.R."/>
            <person name="Dark M.J."/>
            <person name="Tibbals D.L."/>
            <person name="Palmer G.H."/>
            <person name="McGuire T.C."/>
            <person name="Knowles D.P. Jr."/>
        </authorList>
    </citation>
    <scope>NUCLEOTIDE SEQUENCE [LARGE SCALE GENOMIC DNA]</scope>
    <source>
        <strain>St. Maries</strain>
    </source>
</reference>
<accession>Q5PAQ2</accession>
<protein>
    <recommendedName>
        <fullName evidence="1">NADH-quinone oxidoreductase subunit H</fullName>
        <ecNumber evidence="1">7.1.1.-</ecNumber>
    </recommendedName>
    <alternativeName>
        <fullName evidence="1">NADH dehydrogenase I subunit H</fullName>
    </alternativeName>
    <alternativeName>
        <fullName evidence="1">NDH-1 subunit H</fullName>
    </alternativeName>
</protein>
<proteinExistence type="inferred from homology"/>
<organism>
    <name type="scientific">Anaplasma marginale (strain St. Maries)</name>
    <dbReference type="NCBI Taxonomy" id="234826"/>
    <lineage>
        <taxon>Bacteria</taxon>
        <taxon>Pseudomonadati</taxon>
        <taxon>Pseudomonadota</taxon>
        <taxon>Alphaproteobacteria</taxon>
        <taxon>Rickettsiales</taxon>
        <taxon>Anaplasmataceae</taxon>
        <taxon>Anaplasma</taxon>
    </lineage>
</organism>
<sequence>MDILQRLMAQLLSSGSSVFVMLSAIVGVMISVAYLVYMERKVIAFMQLRHGPSVVGPFGLLQPFADALKLVTKESIVPLQSRNFAFFIAPVITFTLALSGWAVIPLGASTYVINGVETTIPASIANINLGVLYIFAISSLEVYGIIMAGWSSGSKYAFLGAIRSASQMISYEVSMGLVVLSVAVSAGSLRLVDIVVMRHTMPYWVDLLLLPMAFVFFISILAETNRHPFDLPEAESELVSGYNVEYSSMPFAMFFLGEYANMILVSAMMTIFFLGGWYPPIDVQFLYLIPGFVWFCLKVLLLLFCFIWVRATIPRYRYDQLMRLGWKVFLPFSFVWVMVVSGVLLYLDKLPK</sequence>
<comment type="function">
    <text evidence="1">NDH-1 shuttles electrons from NADH, via FMN and iron-sulfur (Fe-S) centers, to quinones in the respiratory chain. The immediate electron acceptor for the enzyme in this species is believed to be ubiquinone. Couples the redox reaction to proton translocation (for every two electrons transferred, four hydrogen ions are translocated across the cytoplasmic membrane), and thus conserves the redox energy in a proton gradient. This subunit may bind ubiquinone.</text>
</comment>
<comment type="catalytic activity">
    <reaction evidence="1">
        <text>a quinone + NADH + 5 H(+)(in) = a quinol + NAD(+) + 4 H(+)(out)</text>
        <dbReference type="Rhea" id="RHEA:57888"/>
        <dbReference type="ChEBI" id="CHEBI:15378"/>
        <dbReference type="ChEBI" id="CHEBI:24646"/>
        <dbReference type="ChEBI" id="CHEBI:57540"/>
        <dbReference type="ChEBI" id="CHEBI:57945"/>
        <dbReference type="ChEBI" id="CHEBI:132124"/>
    </reaction>
</comment>
<comment type="subunit">
    <text evidence="1">NDH-1 is composed of 14 different subunits. Subunits NuoA, H, J, K, L, M, N constitute the membrane sector of the complex.</text>
</comment>
<comment type="subcellular location">
    <subcellularLocation>
        <location evidence="1">Cell inner membrane</location>
        <topology evidence="1">Multi-pass membrane protein</topology>
    </subcellularLocation>
</comment>
<comment type="similarity">
    <text evidence="1">Belongs to the complex I subunit 1 family.</text>
</comment>